<reference key="1">
    <citation type="journal article" date="2004" name="J. Bacteriol.">
        <title>Comparative genomics of two Leptospira interrogans serovars reveals novel insights into physiology and pathogenesis.</title>
        <authorList>
            <person name="Nascimento A.L.T.O."/>
            <person name="Ko A.I."/>
            <person name="Martins E.A.L."/>
            <person name="Monteiro-Vitorello C.B."/>
            <person name="Ho P.L."/>
            <person name="Haake D.A."/>
            <person name="Verjovski-Almeida S."/>
            <person name="Hartskeerl R.A."/>
            <person name="Marques M.V."/>
            <person name="Oliveira M.C."/>
            <person name="Menck C.F.M."/>
            <person name="Leite L.C.C."/>
            <person name="Carrer H."/>
            <person name="Coutinho L.L."/>
            <person name="Degrave W.M."/>
            <person name="Dellagostin O.A."/>
            <person name="El-Dorry H."/>
            <person name="Ferro E.S."/>
            <person name="Ferro M.I.T."/>
            <person name="Furlan L.R."/>
            <person name="Gamberini M."/>
            <person name="Giglioti E.A."/>
            <person name="Goes-Neto A."/>
            <person name="Goldman G.H."/>
            <person name="Goldman M.H.S."/>
            <person name="Harakava R."/>
            <person name="Jeronimo S.M.B."/>
            <person name="Junqueira-de-Azevedo I.L.M."/>
            <person name="Kimura E.T."/>
            <person name="Kuramae E.E."/>
            <person name="Lemos E.G.M."/>
            <person name="Lemos M.V.F."/>
            <person name="Marino C.L."/>
            <person name="Nunes L.R."/>
            <person name="de Oliveira R.C."/>
            <person name="Pereira G.G."/>
            <person name="Reis M.S."/>
            <person name="Schriefer A."/>
            <person name="Siqueira W.J."/>
            <person name="Sommer P."/>
            <person name="Tsai S.M."/>
            <person name="Simpson A.J.G."/>
            <person name="Ferro J.A."/>
            <person name="Camargo L.E.A."/>
            <person name="Kitajima J.P."/>
            <person name="Setubal J.C."/>
            <person name="Van Sluys M.A."/>
        </authorList>
    </citation>
    <scope>NUCLEOTIDE SEQUENCE [LARGE SCALE GENOMIC DNA]</scope>
    <source>
        <strain>Fiocruz L1-130</strain>
    </source>
</reference>
<comment type="function">
    <text evidence="1">Involved in mRNA degradation. Catalyzes the phosphorolysis of single-stranded polyribonucleotides processively in the 3'- to 5'-direction.</text>
</comment>
<comment type="catalytic activity">
    <reaction evidence="1">
        <text>RNA(n+1) + phosphate = RNA(n) + a ribonucleoside 5'-diphosphate</text>
        <dbReference type="Rhea" id="RHEA:22096"/>
        <dbReference type="Rhea" id="RHEA-COMP:14527"/>
        <dbReference type="Rhea" id="RHEA-COMP:17342"/>
        <dbReference type="ChEBI" id="CHEBI:43474"/>
        <dbReference type="ChEBI" id="CHEBI:57930"/>
        <dbReference type="ChEBI" id="CHEBI:140395"/>
        <dbReference type="EC" id="2.7.7.8"/>
    </reaction>
</comment>
<comment type="cofactor">
    <cofactor evidence="1">
        <name>Mg(2+)</name>
        <dbReference type="ChEBI" id="CHEBI:18420"/>
    </cofactor>
</comment>
<comment type="subcellular location">
    <subcellularLocation>
        <location evidence="1">Cytoplasm</location>
    </subcellularLocation>
</comment>
<comment type="similarity">
    <text evidence="1">Belongs to the polyribonucleotide nucleotidyltransferase family.</text>
</comment>
<protein>
    <recommendedName>
        <fullName evidence="1">Polyribonucleotide nucleotidyltransferase</fullName>
        <ecNumber evidence="1">2.7.7.8</ecNumber>
    </recommendedName>
    <alternativeName>
        <fullName evidence="1">Polynucleotide phosphorylase</fullName>
        <shortName evidence="1">PNPase</shortName>
    </alternativeName>
</protein>
<accession>Q72NX7</accession>
<name>PNP_LEPIC</name>
<proteinExistence type="inferred from homology"/>
<dbReference type="EC" id="2.7.7.8" evidence="1"/>
<dbReference type="EMBL" id="AE016823">
    <property type="protein sequence ID" value="AAS71259.1"/>
    <property type="molecule type" value="Genomic_DNA"/>
</dbReference>
<dbReference type="RefSeq" id="WP_000149893.1">
    <property type="nucleotide sequence ID" value="NC_005823.1"/>
</dbReference>
<dbReference type="SMR" id="Q72NX7"/>
<dbReference type="GeneID" id="61142581"/>
<dbReference type="KEGG" id="lic:LIC_12701"/>
<dbReference type="HOGENOM" id="CLU_004217_2_2_12"/>
<dbReference type="Proteomes" id="UP000007037">
    <property type="component" value="Chromosome I"/>
</dbReference>
<dbReference type="GO" id="GO:0005829">
    <property type="term" value="C:cytosol"/>
    <property type="evidence" value="ECO:0007669"/>
    <property type="project" value="TreeGrafter"/>
</dbReference>
<dbReference type="GO" id="GO:0000175">
    <property type="term" value="F:3'-5'-RNA exonuclease activity"/>
    <property type="evidence" value="ECO:0007669"/>
    <property type="project" value="TreeGrafter"/>
</dbReference>
<dbReference type="GO" id="GO:0000287">
    <property type="term" value="F:magnesium ion binding"/>
    <property type="evidence" value="ECO:0007669"/>
    <property type="project" value="UniProtKB-UniRule"/>
</dbReference>
<dbReference type="GO" id="GO:0004654">
    <property type="term" value="F:polyribonucleotide nucleotidyltransferase activity"/>
    <property type="evidence" value="ECO:0007669"/>
    <property type="project" value="UniProtKB-UniRule"/>
</dbReference>
<dbReference type="GO" id="GO:0003723">
    <property type="term" value="F:RNA binding"/>
    <property type="evidence" value="ECO:0007669"/>
    <property type="project" value="UniProtKB-UniRule"/>
</dbReference>
<dbReference type="GO" id="GO:0006402">
    <property type="term" value="P:mRNA catabolic process"/>
    <property type="evidence" value="ECO:0007669"/>
    <property type="project" value="UniProtKB-UniRule"/>
</dbReference>
<dbReference type="GO" id="GO:0006396">
    <property type="term" value="P:RNA processing"/>
    <property type="evidence" value="ECO:0007669"/>
    <property type="project" value="InterPro"/>
</dbReference>
<dbReference type="CDD" id="cd02393">
    <property type="entry name" value="KH-I_PNPase"/>
    <property type="match status" value="1"/>
</dbReference>
<dbReference type="CDD" id="cd11363">
    <property type="entry name" value="RNase_PH_PNPase_1"/>
    <property type="match status" value="1"/>
</dbReference>
<dbReference type="CDD" id="cd11364">
    <property type="entry name" value="RNase_PH_PNPase_2"/>
    <property type="match status" value="1"/>
</dbReference>
<dbReference type="CDD" id="cd04472">
    <property type="entry name" value="S1_PNPase"/>
    <property type="match status" value="1"/>
</dbReference>
<dbReference type="FunFam" id="2.40.50.140:FF:000023">
    <property type="entry name" value="Polyribonucleotide nucleotidyltransferase"/>
    <property type="match status" value="1"/>
</dbReference>
<dbReference type="FunFam" id="3.30.1370.10:FF:000001">
    <property type="entry name" value="Polyribonucleotide nucleotidyltransferase"/>
    <property type="match status" value="1"/>
</dbReference>
<dbReference type="FunFam" id="3.30.230.70:FF:000001">
    <property type="entry name" value="Polyribonucleotide nucleotidyltransferase"/>
    <property type="match status" value="1"/>
</dbReference>
<dbReference type="FunFam" id="3.30.230.70:FF:000013">
    <property type="entry name" value="Polyribonucleotide nucleotidyltransferase"/>
    <property type="match status" value="1"/>
</dbReference>
<dbReference type="Gene3D" id="3.30.230.70">
    <property type="entry name" value="GHMP Kinase, N-terminal domain"/>
    <property type="match status" value="2"/>
</dbReference>
<dbReference type="Gene3D" id="3.30.1370.10">
    <property type="entry name" value="K Homology domain, type 1"/>
    <property type="match status" value="1"/>
</dbReference>
<dbReference type="Gene3D" id="2.40.50.140">
    <property type="entry name" value="Nucleic acid-binding proteins"/>
    <property type="match status" value="1"/>
</dbReference>
<dbReference type="HAMAP" id="MF_01595">
    <property type="entry name" value="PNPase"/>
    <property type="match status" value="1"/>
</dbReference>
<dbReference type="InterPro" id="IPR001247">
    <property type="entry name" value="ExoRNase_PH_dom1"/>
</dbReference>
<dbReference type="InterPro" id="IPR015847">
    <property type="entry name" value="ExoRNase_PH_dom2"/>
</dbReference>
<dbReference type="InterPro" id="IPR036345">
    <property type="entry name" value="ExoRNase_PH_dom2_sf"/>
</dbReference>
<dbReference type="InterPro" id="IPR004087">
    <property type="entry name" value="KH_dom"/>
</dbReference>
<dbReference type="InterPro" id="IPR004088">
    <property type="entry name" value="KH_dom_type_1"/>
</dbReference>
<dbReference type="InterPro" id="IPR036612">
    <property type="entry name" value="KH_dom_type_1_sf"/>
</dbReference>
<dbReference type="InterPro" id="IPR012340">
    <property type="entry name" value="NA-bd_OB-fold"/>
</dbReference>
<dbReference type="InterPro" id="IPR012162">
    <property type="entry name" value="PNPase"/>
</dbReference>
<dbReference type="InterPro" id="IPR027408">
    <property type="entry name" value="PNPase/RNase_PH_dom_sf"/>
</dbReference>
<dbReference type="InterPro" id="IPR015848">
    <property type="entry name" value="PNPase_PH_RNA-bd_bac/org-type"/>
</dbReference>
<dbReference type="InterPro" id="IPR036456">
    <property type="entry name" value="PNPase_PH_RNA-bd_sf"/>
</dbReference>
<dbReference type="InterPro" id="IPR020568">
    <property type="entry name" value="Ribosomal_Su5_D2-typ_SF"/>
</dbReference>
<dbReference type="InterPro" id="IPR003029">
    <property type="entry name" value="S1_domain"/>
</dbReference>
<dbReference type="NCBIfam" id="TIGR03591">
    <property type="entry name" value="polynuc_phos"/>
    <property type="match status" value="1"/>
</dbReference>
<dbReference type="NCBIfam" id="NF008805">
    <property type="entry name" value="PRK11824.1"/>
    <property type="match status" value="1"/>
</dbReference>
<dbReference type="PANTHER" id="PTHR11252">
    <property type="entry name" value="POLYRIBONUCLEOTIDE NUCLEOTIDYLTRANSFERASE"/>
    <property type="match status" value="1"/>
</dbReference>
<dbReference type="PANTHER" id="PTHR11252:SF0">
    <property type="entry name" value="POLYRIBONUCLEOTIDE NUCLEOTIDYLTRANSFERASE 1, MITOCHONDRIAL"/>
    <property type="match status" value="1"/>
</dbReference>
<dbReference type="Pfam" id="PF00013">
    <property type="entry name" value="KH_1"/>
    <property type="match status" value="1"/>
</dbReference>
<dbReference type="Pfam" id="PF03726">
    <property type="entry name" value="PNPase"/>
    <property type="match status" value="1"/>
</dbReference>
<dbReference type="Pfam" id="PF01138">
    <property type="entry name" value="RNase_PH"/>
    <property type="match status" value="2"/>
</dbReference>
<dbReference type="Pfam" id="PF03725">
    <property type="entry name" value="RNase_PH_C"/>
    <property type="match status" value="1"/>
</dbReference>
<dbReference type="Pfam" id="PF00575">
    <property type="entry name" value="S1"/>
    <property type="match status" value="1"/>
</dbReference>
<dbReference type="PIRSF" id="PIRSF005499">
    <property type="entry name" value="PNPase"/>
    <property type="match status" value="1"/>
</dbReference>
<dbReference type="SMART" id="SM00322">
    <property type="entry name" value="KH"/>
    <property type="match status" value="1"/>
</dbReference>
<dbReference type="SMART" id="SM00316">
    <property type="entry name" value="S1"/>
    <property type="match status" value="1"/>
</dbReference>
<dbReference type="SUPFAM" id="SSF54791">
    <property type="entry name" value="Eukaryotic type KH-domain (KH-domain type I)"/>
    <property type="match status" value="1"/>
</dbReference>
<dbReference type="SUPFAM" id="SSF50249">
    <property type="entry name" value="Nucleic acid-binding proteins"/>
    <property type="match status" value="1"/>
</dbReference>
<dbReference type="SUPFAM" id="SSF46915">
    <property type="entry name" value="Polynucleotide phosphorylase/guanosine pentaphosphate synthase (PNPase/GPSI), domain 3"/>
    <property type="match status" value="1"/>
</dbReference>
<dbReference type="SUPFAM" id="SSF55666">
    <property type="entry name" value="Ribonuclease PH domain 2-like"/>
    <property type="match status" value="2"/>
</dbReference>
<dbReference type="SUPFAM" id="SSF54211">
    <property type="entry name" value="Ribosomal protein S5 domain 2-like"/>
    <property type="match status" value="2"/>
</dbReference>
<dbReference type="PROSITE" id="PS50084">
    <property type="entry name" value="KH_TYPE_1"/>
    <property type="match status" value="1"/>
</dbReference>
<dbReference type="PROSITE" id="PS50126">
    <property type="entry name" value="S1"/>
    <property type="match status" value="1"/>
</dbReference>
<keyword id="KW-0963">Cytoplasm</keyword>
<keyword id="KW-0460">Magnesium</keyword>
<keyword id="KW-0479">Metal-binding</keyword>
<keyword id="KW-0548">Nucleotidyltransferase</keyword>
<keyword id="KW-0694">RNA-binding</keyword>
<keyword id="KW-0808">Transferase</keyword>
<sequence>MTHTISGQYGRDTIVLETGSWAKQAHGAVVYKSGNLVLLATVCAADEAKEGQDFFPLTCEYTEKLYSVGRFPGGYFKREAKPPEHEILISRIIDRPIRPLFPEGYFCEVQLQVQVLSADGDVSVAGHALNAASAALAVSDIPFNGPIAGARIGRVNGELILNPTTKEILNSDLDLVVAGTKTHIVMIEGEAKELSNEEMIAALRFAQKHIAEFVTLQEEYAKKIGVVKREVKLKVRDEELLSKVKEYAFAKLTTANQTPDKTARNKEISNVNKEVVEFFKDTIEDSDKIKDIKAYLHELEYEIVREQVLTKGTRFDGRKLDEIRSISVEINPLPGPHGSAVFTRGQTQSLGVVTLGTGSDNQRYETLEGQKEKSFMLHYNFPAFSVGEVRRSSGPGRREIGHGNLAERALKLVLPKPDEFPYVIRVVSEILESNGSSSMASVCSGSLALMAAGVPIQGSVSGIAMGLFSDSSGKYAVLSDIAGLEDHFGDMDCKIAGTRKGITAFQMDLKVTGVSFDVLESVFEQAQRGRFHILDIMEKHISKASSTLAGTAPRIIVRNIPKDRIGELIGPGGKNVRGISELTGAELYIEDDGKVTISGSNQESAEKAAKMVDGFFAEVEVGKIYEGKVKRIADFGAFVEILPGKEGLCHISKIDFKRVNSVKDIVKEGDIIRVKVLNVDKTGKIDLSRKDALEEEQV</sequence>
<organism>
    <name type="scientific">Leptospira interrogans serogroup Icterohaemorrhagiae serovar copenhageni (strain Fiocruz L1-130)</name>
    <dbReference type="NCBI Taxonomy" id="267671"/>
    <lineage>
        <taxon>Bacteria</taxon>
        <taxon>Pseudomonadati</taxon>
        <taxon>Spirochaetota</taxon>
        <taxon>Spirochaetia</taxon>
        <taxon>Leptospirales</taxon>
        <taxon>Leptospiraceae</taxon>
        <taxon>Leptospira</taxon>
    </lineage>
</organism>
<feature type="chain" id="PRO_0000329700" description="Polyribonucleotide nucleotidyltransferase">
    <location>
        <begin position="1"/>
        <end position="698"/>
    </location>
</feature>
<feature type="domain" description="KH" evidence="1">
    <location>
        <begin position="553"/>
        <end position="612"/>
    </location>
</feature>
<feature type="domain" description="S1 motif" evidence="1">
    <location>
        <begin position="622"/>
        <end position="690"/>
    </location>
</feature>
<feature type="binding site" evidence="1">
    <location>
        <position position="486"/>
    </location>
    <ligand>
        <name>Mg(2+)</name>
        <dbReference type="ChEBI" id="CHEBI:18420"/>
    </ligand>
</feature>
<feature type="binding site" evidence="1">
    <location>
        <position position="492"/>
    </location>
    <ligand>
        <name>Mg(2+)</name>
        <dbReference type="ChEBI" id="CHEBI:18420"/>
    </ligand>
</feature>
<evidence type="ECO:0000255" key="1">
    <source>
        <dbReference type="HAMAP-Rule" id="MF_01595"/>
    </source>
</evidence>
<gene>
    <name evidence="1" type="primary">pnp</name>
    <name type="ordered locus">LIC_12701</name>
</gene>